<evidence type="ECO:0000250" key="1"/>
<evidence type="ECO:0000255" key="2">
    <source>
        <dbReference type="PROSITE-ProRule" id="PRU00574"/>
    </source>
</evidence>
<name>DCN1_CANAL</name>
<sequence>MSSKTQLRQQFCELTGTSNTTATKYLESVRYDLARAIDNYYNKHPNKAQVTKKPVKVKIDDRLIQIFDKYKDSEDPNKIDIEGTLTYLGDLGISPDQIESLSLALLLKSPKTGVFTRENFLHIWQYYQCFDIGAMSEFITRFNKDLVNNIGGFKDISTVSDDENKSVPLKFQDLYNFTFKFSLETESQKFLDLDTAIEYWKLLLPIITETYSKDNKLDEEFKNHVNERVEQWFKFLTDTEYMTKKSISYDSWSMFYLFFKEIVLIDPIKFKDYDEMAAWPSVVDEFLEYLHDFELL</sequence>
<proteinExistence type="inferred from homology"/>
<feature type="chain" id="PRO_0000129510" description="Defective in cullin neddylation protein 1">
    <location>
        <begin position="1"/>
        <end position="296"/>
    </location>
</feature>
<feature type="domain" description="UBA-like">
    <location>
        <begin position="4"/>
        <end position="41"/>
    </location>
</feature>
<feature type="domain" description="DCUN1" evidence="2">
    <location>
        <begin position="58"/>
        <end position="291"/>
    </location>
</feature>
<comment type="function">
    <text evidence="1">May contribute to neddylation of cullin components of SCF-type E3 ubiquitin ligase complexes. Neddylation of cullins play an essential role in the regulation of SCF-type complexes activity (By similarity).</text>
</comment>
<accession>Q5ADL9</accession>
<accession>A0A1D8PKM0</accession>
<protein>
    <recommendedName>
        <fullName>Defective in cullin neddylation protein 1</fullName>
    </recommendedName>
</protein>
<organism>
    <name type="scientific">Candida albicans (strain SC5314 / ATCC MYA-2876)</name>
    <name type="common">Yeast</name>
    <dbReference type="NCBI Taxonomy" id="237561"/>
    <lineage>
        <taxon>Eukaryota</taxon>
        <taxon>Fungi</taxon>
        <taxon>Dikarya</taxon>
        <taxon>Ascomycota</taxon>
        <taxon>Saccharomycotina</taxon>
        <taxon>Pichiomycetes</taxon>
        <taxon>Debaryomycetaceae</taxon>
        <taxon>Candida/Lodderomyces clade</taxon>
        <taxon>Candida</taxon>
    </lineage>
</organism>
<gene>
    <name type="primary">DCN1</name>
    <name type="ordered locus">CAALFM_C306800CA</name>
    <name type="ORF">CaO19.14114</name>
    <name type="ORF">CaO19.6822</name>
</gene>
<reference key="1">
    <citation type="journal article" date="2004" name="Proc. Natl. Acad. Sci. U.S.A.">
        <title>The diploid genome sequence of Candida albicans.</title>
        <authorList>
            <person name="Jones T."/>
            <person name="Federspiel N.A."/>
            <person name="Chibana H."/>
            <person name="Dungan J."/>
            <person name="Kalman S."/>
            <person name="Magee B.B."/>
            <person name="Newport G."/>
            <person name="Thorstenson Y.R."/>
            <person name="Agabian N."/>
            <person name="Magee P.T."/>
            <person name="Davis R.W."/>
            <person name="Scherer S."/>
        </authorList>
    </citation>
    <scope>NUCLEOTIDE SEQUENCE [LARGE SCALE GENOMIC DNA]</scope>
    <source>
        <strain>SC5314 / ATCC MYA-2876</strain>
    </source>
</reference>
<reference key="2">
    <citation type="journal article" date="2007" name="Genome Biol.">
        <title>Assembly of the Candida albicans genome into sixteen supercontigs aligned on the eight chromosomes.</title>
        <authorList>
            <person name="van het Hoog M."/>
            <person name="Rast T.J."/>
            <person name="Martchenko M."/>
            <person name="Grindle S."/>
            <person name="Dignard D."/>
            <person name="Hogues H."/>
            <person name="Cuomo C."/>
            <person name="Berriman M."/>
            <person name="Scherer S."/>
            <person name="Magee B.B."/>
            <person name="Whiteway M."/>
            <person name="Chibana H."/>
            <person name="Nantel A."/>
            <person name="Magee P.T."/>
        </authorList>
    </citation>
    <scope>GENOME REANNOTATION</scope>
    <source>
        <strain>SC5314 / ATCC MYA-2876</strain>
    </source>
</reference>
<reference key="3">
    <citation type="journal article" date="2013" name="Genome Biol.">
        <title>Assembly of a phased diploid Candida albicans genome facilitates allele-specific measurements and provides a simple model for repeat and indel structure.</title>
        <authorList>
            <person name="Muzzey D."/>
            <person name="Schwartz K."/>
            <person name="Weissman J.S."/>
            <person name="Sherlock G."/>
        </authorList>
    </citation>
    <scope>NUCLEOTIDE SEQUENCE [LARGE SCALE GENOMIC DNA]</scope>
    <scope>GENOME REANNOTATION</scope>
    <source>
        <strain>SC5314 / ATCC MYA-2876</strain>
    </source>
</reference>
<dbReference type="EMBL" id="CP017625">
    <property type="protein sequence ID" value="AOW28686.1"/>
    <property type="molecule type" value="Genomic_DNA"/>
</dbReference>
<dbReference type="RefSeq" id="XP_019330884.1">
    <property type="nucleotide sequence ID" value="XM_019475339.1"/>
</dbReference>
<dbReference type="SMR" id="Q5ADL9"/>
<dbReference type="FunCoup" id="Q5ADL9">
    <property type="interactions" value="424"/>
</dbReference>
<dbReference type="STRING" id="237561.Q5ADL9"/>
<dbReference type="EnsemblFungi" id="C3_06800C_A-T">
    <property type="protein sequence ID" value="C3_06800C_A-T-p1"/>
    <property type="gene ID" value="C3_06800C_A"/>
</dbReference>
<dbReference type="GeneID" id="3638497"/>
<dbReference type="KEGG" id="cal:CAALFM_C306800CA"/>
<dbReference type="CGD" id="CAL0000200583">
    <property type="gene designation" value="orf19.14114"/>
</dbReference>
<dbReference type="VEuPathDB" id="FungiDB:C3_06800C_A"/>
<dbReference type="eggNOG" id="KOG3077">
    <property type="taxonomic scope" value="Eukaryota"/>
</dbReference>
<dbReference type="HOGENOM" id="CLU_047042_0_0_1"/>
<dbReference type="InParanoid" id="Q5ADL9"/>
<dbReference type="OMA" id="LWCKFLQ"/>
<dbReference type="OrthoDB" id="27198at2759"/>
<dbReference type="PRO" id="PR:Q5ADL9"/>
<dbReference type="Proteomes" id="UP000000559">
    <property type="component" value="Chromosome 3"/>
</dbReference>
<dbReference type="GO" id="GO:0000151">
    <property type="term" value="C:ubiquitin ligase complex"/>
    <property type="evidence" value="ECO:0000318"/>
    <property type="project" value="GO_Central"/>
</dbReference>
<dbReference type="GO" id="GO:0097602">
    <property type="term" value="F:cullin family protein binding"/>
    <property type="evidence" value="ECO:0000318"/>
    <property type="project" value="GO_Central"/>
</dbReference>
<dbReference type="GO" id="GO:0031624">
    <property type="term" value="F:ubiquitin conjugating enzyme binding"/>
    <property type="evidence" value="ECO:0000318"/>
    <property type="project" value="GO_Central"/>
</dbReference>
<dbReference type="GO" id="GO:0032182">
    <property type="term" value="F:ubiquitin-like protein binding"/>
    <property type="evidence" value="ECO:0000318"/>
    <property type="project" value="GO_Central"/>
</dbReference>
<dbReference type="GO" id="GO:0045116">
    <property type="term" value="P:protein neddylation"/>
    <property type="evidence" value="ECO:0000318"/>
    <property type="project" value="GO_Central"/>
</dbReference>
<dbReference type="CDD" id="cd14351">
    <property type="entry name" value="UBA_Ubx1_like"/>
    <property type="match status" value="1"/>
</dbReference>
<dbReference type="Gene3D" id="1.10.238.200">
    <property type="entry name" value="Cullin, PONY binding domain"/>
    <property type="match status" value="1"/>
</dbReference>
<dbReference type="Gene3D" id="1.10.8.10">
    <property type="entry name" value="DNA helicase RuvA subunit, C-terminal domain"/>
    <property type="match status" value="1"/>
</dbReference>
<dbReference type="Gene3D" id="1.10.238.10">
    <property type="entry name" value="EF-hand"/>
    <property type="match status" value="1"/>
</dbReference>
<dbReference type="InterPro" id="IPR014764">
    <property type="entry name" value="DCN-prot"/>
</dbReference>
<dbReference type="InterPro" id="IPR042460">
    <property type="entry name" value="DCN1-like_PONY"/>
</dbReference>
<dbReference type="InterPro" id="IPR005176">
    <property type="entry name" value="PONY_dom"/>
</dbReference>
<dbReference type="InterPro" id="IPR009060">
    <property type="entry name" value="UBA-like_sf"/>
</dbReference>
<dbReference type="PANTHER" id="PTHR12281:SF31">
    <property type="entry name" value="DCN1-LIKE PROTEIN 3"/>
    <property type="match status" value="1"/>
</dbReference>
<dbReference type="PANTHER" id="PTHR12281">
    <property type="entry name" value="RP42 RELATED"/>
    <property type="match status" value="1"/>
</dbReference>
<dbReference type="Pfam" id="PF03556">
    <property type="entry name" value="Cullin_binding"/>
    <property type="match status" value="1"/>
</dbReference>
<dbReference type="Pfam" id="PF14555">
    <property type="entry name" value="UBA_4"/>
    <property type="match status" value="1"/>
</dbReference>
<dbReference type="SUPFAM" id="SSF46934">
    <property type="entry name" value="UBA-like"/>
    <property type="match status" value="1"/>
</dbReference>
<dbReference type="PROSITE" id="PS51229">
    <property type="entry name" value="DCUN1"/>
    <property type="match status" value="1"/>
</dbReference>
<keyword id="KW-1185">Reference proteome</keyword>
<keyword id="KW-0833">Ubl conjugation pathway</keyword>